<proteinExistence type="evidence at protein level"/>
<keyword id="KW-0002">3D-structure</keyword>
<keyword id="KW-0067">ATP-binding</keyword>
<keyword id="KW-0143">Chaperone</keyword>
<keyword id="KW-0547">Nucleotide-binding</keyword>
<keyword id="KW-1185">Reference proteome</keyword>
<accession>P61111</accession>
<accession>O24729</accession>
<accession>Q9Y8I3</accession>
<evidence type="ECO:0000250" key="1"/>
<evidence type="ECO:0000256" key="2">
    <source>
        <dbReference type="SAM" id="MobiDB-lite"/>
    </source>
</evidence>
<evidence type="ECO:0000305" key="3"/>
<evidence type="ECO:0007829" key="4">
    <source>
        <dbReference type="PDB" id="1Q3R"/>
    </source>
</evidence>
<sequence>MAQLSGQPVVILPEGTQRYVGRDAQRLNILAARIIAETVRTTLGPKGMDKMLVDSLGDIVVTNDGATILDKIDLQHPAAKMMVEVAKTQDKEAGDGTTTAVVIAGELLRKAEELLDQNIHPSIIIKGYALAAEKAQEILDEIAIRVDPDDEETLLKIAATSITGKNAESHKELLAKLAVEAVKQVAEKKDGKYVVDLDNIKFEKKAGEGVEESELVRGVVIDKEVVHPRMPKRVENAKIALINEALEVKKTETDAKINITSPDQLMSFLEQEEKMLKDMVDHIAQTGANVVFVQKGIDDLAQHYLAKYGIMAVRRVKKSDMEKLAKATGAKIVTNVKDLTPEDLGYAEVVEERKLAGENMIFVEGCKNPKAVTILIRGGTEHVIDEVERALEDAVKVVKDVMEDGAVLPAGGAPEIELAIRLDEYAKQVGGKEALAIENFADALKIIPKTLAENAGLDTVEMLVKVISEHKNRGLGIGIDVFEGKPADMLEKGIIEPLRVKKQAIKSASEAAIMILRIDDVIAAKATKPEGGQGGGMPGGMGGMDMGM</sequence>
<name>THSA_THEKO</name>
<dbReference type="EMBL" id="AB018432">
    <property type="protein sequence ID" value="BAA76952.1"/>
    <property type="molecule type" value="Genomic_DNA"/>
</dbReference>
<dbReference type="EMBL" id="AP006878">
    <property type="protein sequence ID" value="BAD84867.1"/>
    <property type="molecule type" value="Genomic_DNA"/>
</dbReference>
<dbReference type="PIR" id="T43915">
    <property type="entry name" value="T43915"/>
</dbReference>
<dbReference type="RefSeq" id="WP_011249629.1">
    <property type="nucleotide sequence ID" value="NC_006624.1"/>
</dbReference>
<dbReference type="PDB" id="1Q3R">
    <property type="method" value="X-ray"/>
    <property type="resolution" value="2.90 A"/>
    <property type="chains" value="A/B/C/D=1-548"/>
</dbReference>
<dbReference type="PDBsum" id="1Q3R"/>
<dbReference type="SMR" id="P61111"/>
<dbReference type="FunCoup" id="P61111">
    <property type="interactions" value="192"/>
</dbReference>
<dbReference type="STRING" id="69014.TK0678"/>
<dbReference type="EnsemblBacteria" id="BAD84867">
    <property type="protein sequence ID" value="BAD84867"/>
    <property type="gene ID" value="TK0678"/>
</dbReference>
<dbReference type="GeneID" id="78447192"/>
<dbReference type="KEGG" id="tko:TK0678"/>
<dbReference type="PATRIC" id="fig|69014.16.peg.659"/>
<dbReference type="eggNOG" id="arCOG01257">
    <property type="taxonomic scope" value="Archaea"/>
</dbReference>
<dbReference type="HOGENOM" id="CLU_008891_7_3_2"/>
<dbReference type="InParanoid" id="P61111"/>
<dbReference type="OrthoDB" id="9362at2157"/>
<dbReference type="PhylomeDB" id="P61111"/>
<dbReference type="BRENDA" id="3.6.4.B10">
    <property type="organism ID" value="5246"/>
</dbReference>
<dbReference type="Proteomes" id="UP000000536">
    <property type="component" value="Chromosome"/>
</dbReference>
<dbReference type="GO" id="GO:0005524">
    <property type="term" value="F:ATP binding"/>
    <property type="evidence" value="ECO:0007669"/>
    <property type="project" value="UniProtKB-KW"/>
</dbReference>
<dbReference type="GO" id="GO:0016887">
    <property type="term" value="F:ATP hydrolysis activity"/>
    <property type="evidence" value="ECO:0007669"/>
    <property type="project" value="InterPro"/>
</dbReference>
<dbReference type="GO" id="GO:0140662">
    <property type="term" value="F:ATP-dependent protein folding chaperone"/>
    <property type="evidence" value="ECO:0007669"/>
    <property type="project" value="InterPro"/>
</dbReference>
<dbReference type="GO" id="GO:0051082">
    <property type="term" value="F:unfolded protein binding"/>
    <property type="evidence" value="ECO:0000318"/>
    <property type="project" value="GO_Central"/>
</dbReference>
<dbReference type="GO" id="GO:0006457">
    <property type="term" value="P:protein folding"/>
    <property type="evidence" value="ECO:0000318"/>
    <property type="project" value="GO_Central"/>
</dbReference>
<dbReference type="CDD" id="cd03343">
    <property type="entry name" value="cpn60"/>
    <property type="match status" value="1"/>
</dbReference>
<dbReference type="Gene3D" id="3.50.7.10">
    <property type="entry name" value="GroEL"/>
    <property type="match status" value="1"/>
</dbReference>
<dbReference type="Gene3D" id="1.10.560.10">
    <property type="entry name" value="GroEL-like equatorial domain"/>
    <property type="match status" value="1"/>
</dbReference>
<dbReference type="Gene3D" id="3.30.260.10">
    <property type="entry name" value="TCP-1-like chaperonin intermediate domain"/>
    <property type="match status" value="1"/>
</dbReference>
<dbReference type="InterPro" id="IPR017998">
    <property type="entry name" value="Chaperone_TCP-1"/>
</dbReference>
<dbReference type="InterPro" id="IPR002194">
    <property type="entry name" value="Chaperonin_TCP-1_CS"/>
</dbReference>
<dbReference type="InterPro" id="IPR002423">
    <property type="entry name" value="Cpn60/GroEL/TCP-1"/>
</dbReference>
<dbReference type="InterPro" id="IPR027409">
    <property type="entry name" value="GroEL-like_apical_dom_sf"/>
</dbReference>
<dbReference type="InterPro" id="IPR027413">
    <property type="entry name" value="GROEL-like_equatorial_sf"/>
</dbReference>
<dbReference type="InterPro" id="IPR027410">
    <property type="entry name" value="TCP-1-like_intermed_sf"/>
</dbReference>
<dbReference type="InterPro" id="IPR053374">
    <property type="entry name" value="TCP-1_chaperonin"/>
</dbReference>
<dbReference type="InterPro" id="IPR054827">
    <property type="entry name" value="thermosome_alpha"/>
</dbReference>
<dbReference type="InterPro" id="IPR012714">
    <property type="entry name" value="Thermosome_arc"/>
</dbReference>
<dbReference type="NCBIfam" id="NF041082">
    <property type="entry name" value="thermosome_alpha"/>
    <property type="match status" value="1"/>
</dbReference>
<dbReference type="NCBIfam" id="TIGR02339">
    <property type="entry name" value="thermosome_arch"/>
    <property type="match status" value="1"/>
</dbReference>
<dbReference type="NCBIfam" id="NF041083">
    <property type="entry name" value="thermosome_beta"/>
    <property type="match status" value="1"/>
</dbReference>
<dbReference type="PANTHER" id="PTHR11353">
    <property type="entry name" value="CHAPERONIN"/>
    <property type="match status" value="1"/>
</dbReference>
<dbReference type="Pfam" id="PF00118">
    <property type="entry name" value="Cpn60_TCP1"/>
    <property type="match status" value="1"/>
</dbReference>
<dbReference type="PRINTS" id="PR00304">
    <property type="entry name" value="TCOMPLEXTCP1"/>
</dbReference>
<dbReference type="SUPFAM" id="SSF52029">
    <property type="entry name" value="GroEL apical domain-like"/>
    <property type="match status" value="1"/>
</dbReference>
<dbReference type="SUPFAM" id="SSF48592">
    <property type="entry name" value="GroEL equatorial domain-like"/>
    <property type="match status" value="1"/>
</dbReference>
<dbReference type="SUPFAM" id="SSF54849">
    <property type="entry name" value="GroEL-intermediate domain like"/>
    <property type="match status" value="1"/>
</dbReference>
<dbReference type="PROSITE" id="PS00750">
    <property type="entry name" value="TCP1_1"/>
    <property type="match status" value="1"/>
</dbReference>
<dbReference type="PROSITE" id="PS00751">
    <property type="entry name" value="TCP1_2"/>
    <property type="match status" value="1"/>
</dbReference>
<dbReference type="PROSITE" id="PS00995">
    <property type="entry name" value="TCP1_3"/>
    <property type="match status" value="1"/>
</dbReference>
<comment type="function">
    <text evidence="1">Molecular chaperone; binds unfolded polypeptides in vitro, and has a weak ATPase activity.</text>
</comment>
<comment type="subunit">
    <text evidence="1">Forms a Heterooligomeric complex of two stacked eight-membered rings.</text>
</comment>
<comment type="similarity">
    <text evidence="3">Belongs to the TCP-1 chaperonin family.</text>
</comment>
<feature type="chain" id="PRO_0000128397" description="Thermosome subunit alpha">
    <location>
        <begin position="1"/>
        <end position="548"/>
    </location>
</feature>
<feature type="region of interest" description="Disordered" evidence="2">
    <location>
        <begin position="527"/>
        <end position="548"/>
    </location>
</feature>
<feature type="compositionally biased region" description="Gly residues" evidence="2">
    <location>
        <begin position="531"/>
        <end position="548"/>
    </location>
</feature>
<feature type="strand" evidence="4">
    <location>
        <begin position="17"/>
        <end position="20"/>
    </location>
</feature>
<feature type="helix" evidence="4">
    <location>
        <begin position="21"/>
        <end position="40"/>
    </location>
</feature>
<feature type="strand" evidence="4">
    <location>
        <begin position="50"/>
        <end position="53"/>
    </location>
</feature>
<feature type="strand" evidence="4">
    <location>
        <begin position="59"/>
        <end position="62"/>
    </location>
</feature>
<feature type="helix" evidence="4">
    <location>
        <begin position="65"/>
        <end position="71"/>
    </location>
</feature>
<feature type="helix" evidence="4">
    <location>
        <begin position="77"/>
        <end position="92"/>
    </location>
</feature>
<feature type="helix" evidence="4">
    <location>
        <begin position="97"/>
        <end position="116"/>
    </location>
</feature>
<feature type="helix" evidence="4">
    <location>
        <begin position="121"/>
        <end position="142"/>
    </location>
</feature>
<feature type="helix" evidence="4">
    <location>
        <begin position="151"/>
        <end position="162"/>
    </location>
</feature>
<feature type="helix" evidence="4">
    <location>
        <begin position="166"/>
        <end position="170"/>
    </location>
</feature>
<feature type="helix" evidence="4">
    <location>
        <begin position="171"/>
        <end position="185"/>
    </location>
</feature>
<feature type="strand" evidence="4">
    <location>
        <begin position="187"/>
        <end position="191"/>
    </location>
</feature>
<feature type="helix" evidence="4">
    <location>
        <begin position="197"/>
        <end position="199"/>
    </location>
</feature>
<feature type="strand" evidence="4">
    <location>
        <begin position="200"/>
        <end position="208"/>
    </location>
</feature>
<feature type="helix" evidence="4">
    <location>
        <begin position="210"/>
        <end position="212"/>
    </location>
</feature>
<feature type="strand" evidence="4">
    <location>
        <begin position="214"/>
        <end position="222"/>
    </location>
</feature>
<feature type="strand" evidence="4">
    <location>
        <begin position="232"/>
        <end position="242"/>
    </location>
</feature>
<feature type="strand" evidence="4">
    <location>
        <begin position="255"/>
        <end position="257"/>
    </location>
</feature>
<feature type="helix" evidence="4">
    <location>
        <begin position="262"/>
        <end position="285"/>
    </location>
</feature>
<feature type="strand" evidence="4">
    <location>
        <begin position="289"/>
        <end position="295"/>
    </location>
</feature>
<feature type="helix" evidence="4">
    <location>
        <begin position="299"/>
        <end position="307"/>
    </location>
</feature>
<feature type="strand" evidence="4">
    <location>
        <begin position="311"/>
        <end position="313"/>
    </location>
</feature>
<feature type="helix" evidence="4">
    <location>
        <begin position="318"/>
        <end position="328"/>
    </location>
</feature>
<feature type="strand" evidence="4">
    <location>
        <begin position="332"/>
        <end position="335"/>
    </location>
</feature>
<feature type="helix" evidence="4">
    <location>
        <begin position="336"/>
        <end position="338"/>
    </location>
</feature>
<feature type="helix" evidence="4">
    <location>
        <begin position="341"/>
        <end position="343"/>
    </location>
</feature>
<feature type="strand" evidence="4">
    <location>
        <begin position="345"/>
        <end position="355"/>
    </location>
</feature>
<feature type="strand" evidence="4">
    <location>
        <begin position="358"/>
        <end position="364"/>
    </location>
</feature>
<feature type="strand" evidence="4">
    <location>
        <begin position="370"/>
        <end position="380"/>
    </location>
</feature>
<feature type="helix" evidence="4">
    <location>
        <begin position="381"/>
        <end position="403"/>
    </location>
</feature>
<feature type="strand" evidence="4">
    <location>
        <begin position="406"/>
        <end position="409"/>
    </location>
</feature>
<feature type="helix" evidence="4">
    <location>
        <begin position="413"/>
        <end position="429"/>
    </location>
</feature>
<feature type="helix" evidence="4">
    <location>
        <begin position="431"/>
        <end position="443"/>
    </location>
</feature>
<feature type="helix" evidence="4">
    <location>
        <begin position="446"/>
        <end position="455"/>
    </location>
</feature>
<feature type="helix" evidence="4">
    <location>
        <begin position="459"/>
        <end position="473"/>
    </location>
</feature>
<feature type="strand" evidence="4">
    <location>
        <begin position="477"/>
        <end position="480"/>
    </location>
</feature>
<feature type="turn" evidence="4">
    <location>
        <begin position="481"/>
        <end position="484"/>
    </location>
</feature>
<feature type="strand" evidence="4">
    <location>
        <begin position="485"/>
        <end position="488"/>
    </location>
</feature>
<feature type="turn" evidence="4">
    <location>
        <begin position="489"/>
        <end position="493"/>
    </location>
</feature>
<feature type="strand" evidence="4">
    <location>
        <begin position="495"/>
        <end position="497"/>
    </location>
</feature>
<feature type="helix" evidence="4">
    <location>
        <begin position="498"/>
        <end position="516"/>
    </location>
</feature>
<feature type="strand" evidence="4">
    <location>
        <begin position="518"/>
        <end position="523"/>
    </location>
</feature>
<protein>
    <recommendedName>
        <fullName>Thermosome subunit alpha</fullName>
    </recommendedName>
    <alternativeName>
        <fullName>Chaperonin subunit alpha</fullName>
    </alternativeName>
    <alternativeName>
        <fullName>Thermosome subunit 1</fullName>
    </alternativeName>
</protein>
<organism>
    <name type="scientific">Thermococcus kodakarensis (strain ATCC BAA-918 / JCM 12380 / KOD1)</name>
    <name type="common">Pyrococcus kodakaraensis (strain KOD1)</name>
    <dbReference type="NCBI Taxonomy" id="69014"/>
    <lineage>
        <taxon>Archaea</taxon>
        <taxon>Methanobacteriati</taxon>
        <taxon>Methanobacteriota</taxon>
        <taxon>Thermococci</taxon>
        <taxon>Thermococcales</taxon>
        <taxon>Thermococcaceae</taxon>
        <taxon>Thermococcus</taxon>
    </lineage>
</organism>
<gene>
    <name type="primary">thsA</name>
    <name type="synonym">cpkA</name>
    <name type="ordered locus">TK0678</name>
</gene>
<reference key="1">
    <citation type="journal article" date="1999" name="Appl. Environ. Microbiol.">
        <title>Isolation and characterization of a second subunit of molecular chaperonin from Pyrococcus kodakaraensis KOD1: analysis of an ATPase-deficient mutant enzyme.</title>
        <authorList>
            <person name="Izumi M."/>
            <person name="Fujiwara S."/>
            <person name="Takagi M."/>
            <person name="Kanaya S."/>
            <person name="Imanaka T."/>
        </authorList>
    </citation>
    <scope>NUCLEOTIDE SEQUENCE [GENOMIC DNA]</scope>
    <source>
        <strain>ATCC BAA-918 / JCM 12380 / KOD1</strain>
    </source>
</reference>
<reference key="2">
    <citation type="journal article" date="2005" name="Genome Res.">
        <title>Complete genome sequence of the hyperthermophilic archaeon Thermococcus kodakaraensis KOD1 and comparison with Pyrococcus genomes.</title>
        <authorList>
            <person name="Fukui T."/>
            <person name="Atomi H."/>
            <person name="Kanai T."/>
            <person name="Matsumi R."/>
            <person name="Fujiwara S."/>
            <person name="Imanaka T."/>
        </authorList>
    </citation>
    <scope>NUCLEOTIDE SEQUENCE [LARGE SCALE GENOMIC DNA]</scope>
    <source>
        <strain>ATCC BAA-918 / JCM 12380 / KOD1</strain>
    </source>
</reference>